<name>PUR9_BACTN</name>
<protein>
    <recommendedName>
        <fullName evidence="1">Bifunctional purine biosynthesis protein PurH</fullName>
    </recommendedName>
    <domain>
        <recommendedName>
            <fullName evidence="1">Phosphoribosylaminoimidazolecarboxamide formyltransferase</fullName>
            <ecNumber evidence="1">2.1.2.3</ecNumber>
        </recommendedName>
        <alternativeName>
            <fullName evidence="1">AICAR transformylase</fullName>
        </alternativeName>
    </domain>
    <domain>
        <recommendedName>
            <fullName evidence="1">IMP cyclohydrolase</fullName>
            <ecNumber evidence="1">3.5.4.10</ecNumber>
        </recommendedName>
        <alternativeName>
            <fullName evidence="1">ATIC</fullName>
        </alternativeName>
        <alternativeName>
            <fullName evidence="1">IMP synthase</fullName>
        </alternativeName>
        <alternativeName>
            <fullName evidence="1">Inosinicase</fullName>
        </alternativeName>
    </domain>
</protein>
<evidence type="ECO:0000255" key="1">
    <source>
        <dbReference type="HAMAP-Rule" id="MF_00139"/>
    </source>
</evidence>
<evidence type="ECO:0000255" key="2">
    <source>
        <dbReference type="PROSITE-ProRule" id="PRU01202"/>
    </source>
</evidence>
<organism>
    <name type="scientific">Bacteroides thetaiotaomicron (strain ATCC 29148 / DSM 2079 / JCM 5827 / CCUG 10774 / NCTC 10582 / VPI-5482 / E50)</name>
    <dbReference type="NCBI Taxonomy" id="226186"/>
    <lineage>
        <taxon>Bacteria</taxon>
        <taxon>Pseudomonadati</taxon>
        <taxon>Bacteroidota</taxon>
        <taxon>Bacteroidia</taxon>
        <taxon>Bacteroidales</taxon>
        <taxon>Bacteroidaceae</taxon>
        <taxon>Bacteroides</taxon>
    </lineage>
</organism>
<gene>
    <name evidence="1" type="primary">purH</name>
    <name type="ordered locus">BT_3812</name>
</gene>
<proteinExistence type="inferred from homology"/>
<dbReference type="EC" id="2.1.2.3" evidence="1"/>
<dbReference type="EC" id="3.5.4.10" evidence="1"/>
<dbReference type="EMBL" id="AE015928">
    <property type="protein sequence ID" value="AAO78917.1"/>
    <property type="molecule type" value="Genomic_DNA"/>
</dbReference>
<dbReference type="RefSeq" id="NP_812723.1">
    <property type="nucleotide sequence ID" value="NC_004663.1"/>
</dbReference>
<dbReference type="RefSeq" id="WP_008762746.1">
    <property type="nucleotide sequence ID" value="NC_004663.1"/>
</dbReference>
<dbReference type="SMR" id="Q8A155"/>
<dbReference type="FunCoup" id="Q8A155">
    <property type="interactions" value="500"/>
</dbReference>
<dbReference type="STRING" id="226186.BT_3812"/>
<dbReference type="PaxDb" id="226186-BT_3812"/>
<dbReference type="EnsemblBacteria" id="AAO78917">
    <property type="protein sequence ID" value="AAO78917"/>
    <property type="gene ID" value="BT_3812"/>
</dbReference>
<dbReference type="GeneID" id="60924982"/>
<dbReference type="KEGG" id="bth:BT_3812"/>
<dbReference type="PATRIC" id="fig|226186.12.peg.3876"/>
<dbReference type="eggNOG" id="COG0138">
    <property type="taxonomic scope" value="Bacteria"/>
</dbReference>
<dbReference type="HOGENOM" id="CLU_016316_5_2_10"/>
<dbReference type="InParanoid" id="Q8A155"/>
<dbReference type="OrthoDB" id="9802065at2"/>
<dbReference type="UniPathway" id="UPA00074">
    <property type="reaction ID" value="UER00133"/>
</dbReference>
<dbReference type="UniPathway" id="UPA00074">
    <property type="reaction ID" value="UER00135"/>
</dbReference>
<dbReference type="Proteomes" id="UP000001414">
    <property type="component" value="Chromosome"/>
</dbReference>
<dbReference type="GO" id="GO:0005829">
    <property type="term" value="C:cytosol"/>
    <property type="evidence" value="ECO:0000318"/>
    <property type="project" value="GO_Central"/>
</dbReference>
<dbReference type="GO" id="GO:0003937">
    <property type="term" value="F:IMP cyclohydrolase activity"/>
    <property type="evidence" value="ECO:0000318"/>
    <property type="project" value="GO_Central"/>
</dbReference>
<dbReference type="GO" id="GO:0004643">
    <property type="term" value="F:phosphoribosylaminoimidazolecarboxamide formyltransferase activity"/>
    <property type="evidence" value="ECO:0000318"/>
    <property type="project" value="GO_Central"/>
</dbReference>
<dbReference type="GO" id="GO:0006189">
    <property type="term" value="P:'de novo' IMP biosynthetic process"/>
    <property type="evidence" value="ECO:0000318"/>
    <property type="project" value="GO_Central"/>
</dbReference>
<dbReference type="CDD" id="cd01421">
    <property type="entry name" value="IMPCH"/>
    <property type="match status" value="1"/>
</dbReference>
<dbReference type="FunFam" id="3.40.140.20:FF:000001">
    <property type="entry name" value="Bifunctional purine biosynthesis protein PurH"/>
    <property type="match status" value="1"/>
</dbReference>
<dbReference type="FunFam" id="3.40.140.20:FF:000005">
    <property type="entry name" value="Bifunctional purine biosynthesis protein PurH"/>
    <property type="match status" value="1"/>
</dbReference>
<dbReference type="FunFam" id="3.40.50.1380:FF:000012">
    <property type="entry name" value="Bifunctional purine biosynthesis protein PurH"/>
    <property type="match status" value="1"/>
</dbReference>
<dbReference type="Gene3D" id="3.40.140.20">
    <property type="match status" value="2"/>
</dbReference>
<dbReference type="Gene3D" id="3.40.50.1380">
    <property type="entry name" value="Methylglyoxal synthase-like domain"/>
    <property type="match status" value="1"/>
</dbReference>
<dbReference type="HAMAP" id="MF_00139">
    <property type="entry name" value="PurH"/>
    <property type="match status" value="1"/>
</dbReference>
<dbReference type="InterPro" id="IPR024051">
    <property type="entry name" value="AICAR_Tfase_dup_dom_sf"/>
</dbReference>
<dbReference type="InterPro" id="IPR016193">
    <property type="entry name" value="Cytidine_deaminase-like"/>
</dbReference>
<dbReference type="InterPro" id="IPR011607">
    <property type="entry name" value="MGS-like_dom"/>
</dbReference>
<dbReference type="InterPro" id="IPR036914">
    <property type="entry name" value="MGS-like_dom_sf"/>
</dbReference>
<dbReference type="InterPro" id="IPR002695">
    <property type="entry name" value="PurH-like"/>
</dbReference>
<dbReference type="NCBIfam" id="NF002049">
    <property type="entry name" value="PRK00881.1"/>
    <property type="match status" value="1"/>
</dbReference>
<dbReference type="PANTHER" id="PTHR11692:SF0">
    <property type="entry name" value="BIFUNCTIONAL PURINE BIOSYNTHESIS PROTEIN ATIC"/>
    <property type="match status" value="1"/>
</dbReference>
<dbReference type="PANTHER" id="PTHR11692">
    <property type="entry name" value="BIFUNCTIONAL PURINE BIOSYNTHESIS PROTEIN PURH"/>
    <property type="match status" value="1"/>
</dbReference>
<dbReference type="Pfam" id="PF01808">
    <property type="entry name" value="AICARFT_IMPCHas"/>
    <property type="match status" value="1"/>
</dbReference>
<dbReference type="Pfam" id="PF02142">
    <property type="entry name" value="MGS"/>
    <property type="match status" value="1"/>
</dbReference>
<dbReference type="PIRSF" id="PIRSF000414">
    <property type="entry name" value="AICARFT_IMPCHas"/>
    <property type="match status" value="1"/>
</dbReference>
<dbReference type="SMART" id="SM00798">
    <property type="entry name" value="AICARFT_IMPCHas"/>
    <property type="match status" value="1"/>
</dbReference>
<dbReference type="SMART" id="SM00851">
    <property type="entry name" value="MGS"/>
    <property type="match status" value="1"/>
</dbReference>
<dbReference type="SUPFAM" id="SSF53927">
    <property type="entry name" value="Cytidine deaminase-like"/>
    <property type="match status" value="1"/>
</dbReference>
<dbReference type="SUPFAM" id="SSF52335">
    <property type="entry name" value="Methylglyoxal synthase-like"/>
    <property type="match status" value="1"/>
</dbReference>
<dbReference type="PROSITE" id="PS51855">
    <property type="entry name" value="MGS"/>
    <property type="match status" value="1"/>
</dbReference>
<comment type="catalytic activity">
    <reaction evidence="1">
        <text>(6R)-10-formyltetrahydrofolate + 5-amino-1-(5-phospho-beta-D-ribosyl)imidazole-4-carboxamide = 5-formamido-1-(5-phospho-D-ribosyl)imidazole-4-carboxamide + (6S)-5,6,7,8-tetrahydrofolate</text>
        <dbReference type="Rhea" id="RHEA:22192"/>
        <dbReference type="ChEBI" id="CHEBI:57453"/>
        <dbReference type="ChEBI" id="CHEBI:58467"/>
        <dbReference type="ChEBI" id="CHEBI:58475"/>
        <dbReference type="ChEBI" id="CHEBI:195366"/>
        <dbReference type="EC" id="2.1.2.3"/>
    </reaction>
</comment>
<comment type="catalytic activity">
    <reaction evidence="1">
        <text>IMP + H2O = 5-formamido-1-(5-phospho-D-ribosyl)imidazole-4-carboxamide</text>
        <dbReference type="Rhea" id="RHEA:18445"/>
        <dbReference type="ChEBI" id="CHEBI:15377"/>
        <dbReference type="ChEBI" id="CHEBI:58053"/>
        <dbReference type="ChEBI" id="CHEBI:58467"/>
        <dbReference type="EC" id="3.5.4.10"/>
    </reaction>
</comment>
<comment type="pathway">
    <text evidence="1">Purine metabolism; IMP biosynthesis via de novo pathway; 5-formamido-1-(5-phospho-D-ribosyl)imidazole-4-carboxamide from 5-amino-1-(5-phospho-D-ribosyl)imidazole-4-carboxamide (10-formyl THF route): step 1/1.</text>
</comment>
<comment type="pathway">
    <text evidence="1">Purine metabolism; IMP biosynthesis via de novo pathway; IMP from 5-formamido-1-(5-phospho-D-ribosyl)imidazole-4-carboxamide: step 1/1.</text>
</comment>
<comment type="domain">
    <text evidence="1">The IMP cyclohydrolase activity resides in the N-terminal region.</text>
</comment>
<comment type="similarity">
    <text evidence="1">Belongs to the PurH family.</text>
</comment>
<feature type="chain" id="PRO_0000192071" description="Bifunctional purine biosynthesis protein PurH">
    <location>
        <begin position="1"/>
        <end position="507"/>
    </location>
</feature>
<feature type="domain" description="MGS-like" evidence="2">
    <location>
        <begin position="1"/>
        <end position="149"/>
    </location>
</feature>
<sequence length="507" mass="55880">MSESKRIKTALVSVYHKEGLDEIITKLYEEGVEFLSTGGTRQFIESLGYPCKAVEDLTTYPSILGGRVKTLHPKIFGGILCRRDLEQDIQQIEKYEIPEIDLVIVDLYPFEATVASGASEADIIEKIDIGGISLIRAAAKNYNDVIIVASQAQYKPLLDMLMEHGATSSLEERRWMAKEAFAVSSHYDSAIFNYFDAGEGSAFRCSVNNQKQLRYGENPHQKGYFYGNLDAMFDQIHGKEISYNNLLDINAAVDLIDEYEDLTFAILKHNNACGLASRPTVLEAWTDALAGDPVSAFGGVLITNGVIDKAAAEEINKIFFEVIIAPDYDVDALEILGQKKNRIILVRKEAKLPKKQFRALLNGVLVQDKDMNIETVADLRTVTDKAPTPEEVEDLLFANKIVKNSKSNAIVLAKGKQLLASGVGQTSRVDALKQAIEKAKSFGFDLNGAVMASDAFFPFPDCVEIADKEGITAVIQPGGSVKDDLTFAYCNEHGMAMVTTGIRHFKH</sequence>
<accession>Q8A155</accession>
<keyword id="KW-0378">Hydrolase</keyword>
<keyword id="KW-0511">Multifunctional enzyme</keyword>
<keyword id="KW-0658">Purine biosynthesis</keyword>
<keyword id="KW-1185">Reference proteome</keyword>
<keyword id="KW-0808">Transferase</keyword>
<reference key="1">
    <citation type="journal article" date="2003" name="Science">
        <title>A genomic view of the human-Bacteroides thetaiotaomicron symbiosis.</title>
        <authorList>
            <person name="Xu J."/>
            <person name="Bjursell M.K."/>
            <person name="Himrod J."/>
            <person name="Deng S."/>
            <person name="Carmichael L.K."/>
            <person name="Chiang H.C."/>
            <person name="Hooper L.V."/>
            <person name="Gordon J.I."/>
        </authorList>
    </citation>
    <scope>NUCLEOTIDE SEQUENCE [LARGE SCALE GENOMIC DNA]</scope>
    <source>
        <strain>ATCC 29148 / DSM 2079 / JCM 5827 / CCUG 10774 / NCTC 10582 / VPI-5482 / E50</strain>
    </source>
</reference>